<sequence length="141" mass="15593">MQLTSFTDYGLRALIYMASLPEGRMTSISEVTDVYGVSRNHMVKIINQLSRAGYVTAVRGKNGGIRLGKPASAIRIGDVVRELEPLSLVNCSSEFCHITPACRLKQALSKAVQSFLTELDNYTLADLVEENQPLYKLLLVE</sequence>
<feature type="chain" id="PRO_1000085432" description="HTH-type transcriptional repressor NsrR">
    <location>
        <begin position="1"/>
        <end position="141"/>
    </location>
</feature>
<feature type="domain" description="HTH rrf2-type" evidence="1">
    <location>
        <begin position="2"/>
        <end position="129"/>
    </location>
</feature>
<feature type="DNA-binding region" description="H-T-H motif" evidence="1">
    <location>
        <begin position="28"/>
        <end position="51"/>
    </location>
</feature>
<feature type="binding site" evidence="1">
    <location>
        <position position="91"/>
    </location>
    <ligand>
        <name>[2Fe-2S] cluster</name>
        <dbReference type="ChEBI" id="CHEBI:190135"/>
    </ligand>
</feature>
<feature type="binding site" evidence="1">
    <location>
        <position position="96"/>
    </location>
    <ligand>
        <name>[2Fe-2S] cluster</name>
        <dbReference type="ChEBI" id="CHEBI:190135"/>
    </ligand>
</feature>
<feature type="binding site" evidence="1">
    <location>
        <position position="102"/>
    </location>
    <ligand>
        <name>[2Fe-2S] cluster</name>
        <dbReference type="ChEBI" id="CHEBI:190135"/>
    </ligand>
</feature>
<accession>A1AJ83</accession>
<proteinExistence type="inferred from homology"/>
<dbReference type="EMBL" id="CP000468">
    <property type="protein sequence ID" value="ABJ03723.1"/>
    <property type="molecule type" value="Genomic_DNA"/>
</dbReference>
<dbReference type="RefSeq" id="WP_001177639.1">
    <property type="nucleotide sequence ID" value="NZ_CADILS010000035.1"/>
</dbReference>
<dbReference type="SMR" id="A1AJ83"/>
<dbReference type="GeneID" id="93777643"/>
<dbReference type="KEGG" id="ecv:APECO1_2214"/>
<dbReference type="HOGENOM" id="CLU_107144_2_1_6"/>
<dbReference type="Proteomes" id="UP000008216">
    <property type="component" value="Chromosome"/>
</dbReference>
<dbReference type="GO" id="GO:0005829">
    <property type="term" value="C:cytosol"/>
    <property type="evidence" value="ECO:0007669"/>
    <property type="project" value="TreeGrafter"/>
</dbReference>
<dbReference type="GO" id="GO:0051537">
    <property type="term" value="F:2 iron, 2 sulfur cluster binding"/>
    <property type="evidence" value="ECO:0007669"/>
    <property type="project" value="UniProtKB-KW"/>
</dbReference>
<dbReference type="GO" id="GO:0003700">
    <property type="term" value="F:DNA-binding transcription factor activity"/>
    <property type="evidence" value="ECO:0007669"/>
    <property type="project" value="UniProtKB-UniRule"/>
</dbReference>
<dbReference type="GO" id="GO:0003690">
    <property type="term" value="F:double-stranded DNA binding"/>
    <property type="evidence" value="ECO:0007669"/>
    <property type="project" value="UniProtKB-UniRule"/>
</dbReference>
<dbReference type="GO" id="GO:0005506">
    <property type="term" value="F:iron ion binding"/>
    <property type="evidence" value="ECO:0007669"/>
    <property type="project" value="UniProtKB-UniRule"/>
</dbReference>
<dbReference type="GO" id="GO:0045892">
    <property type="term" value="P:negative regulation of DNA-templated transcription"/>
    <property type="evidence" value="ECO:0007669"/>
    <property type="project" value="InterPro"/>
</dbReference>
<dbReference type="FunFam" id="1.10.10.10:FF:000105">
    <property type="entry name" value="HTH-type transcriptional repressor NsrR"/>
    <property type="match status" value="1"/>
</dbReference>
<dbReference type="Gene3D" id="1.10.10.10">
    <property type="entry name" value="Winged helix-like DNA-binding domain superfamily/Winged helix DNA-binding domain"/>
    <property type="match status" value="1"/>
</dbReference>
<dbReference type="HAMAP" id="MF_01177">
    <property type="entry name" value="HTH_type_NsrR"/>
    <property type="match status" value="1"/>
</dbReference>
<dbReference type="InterPro" id="IPR030489">
    <property type="entry name" value="TR_Rrf2-type_CS"/>
</dbReference>
<dbReference type="InterPro" id="IPR000944">
    <property type="entry name" value="Tscrpt_reg_Rrf2"/>
</dbReference>
<dbReference type="InterPro" id="IPR023761">
    <property type="entry name" value="Tscrpt_rep_HTH_NsrR"/>
</dbReference>
<dbReference type="InterPro" id="IPR036388">
    <property type="entry name" value="WH-like_DNA-bd_sf"/>
</dbReference>
<dbReference type="InterPro" id="IPR036390">
    <property type="entry name" value="WH_DNA-bd_sf"/>
</dbReference>
<dbReference type="NCBIfam" id="NF008240">
    <property type="entry name" value="PRK11014.1"/>
    <property type="match status" value="1"/>
</dbReference>
<dbReference type="NCBIfam" id="TIGR00738">
    <property type="entry name" value="rrf2_super"/>
    <property type="match status" value="1"/>
</dbReference>
<dbReference type="PANTHER" id="PTHR33221:SF4">
    <property type="entry name" value="HTH-TYPE TRANSCRIPTIONAL REPRESSOR NSRR"/>
    <property type="match status" value="1"/>
</dbReference>
<dbReference type="PANTHER" id="PTHR33221">
    <property type="entry name" value="WINGED HELIX-TURN-HELIX TRANSCRIPTIONAL REGULATOR, RRF2 FAMILY"/>
    <property type="match status" value="1"/>
</dbReference>
<dbReference type="Pfam" id="PF02082">
    <property type="entry name" value="Rrf2"/>
    <property type="match status" value="1"/>
</dbReference>
<dbReference type="SUPFAM" id="SSF46785">
    <property type="entry name" value="Winged helix' DNA-binding domain"/>
    <property type="match status" value="1"/>
</dbReference>
<dbReference type="PROSITE" id="PS01332">
    <property type="entry name" value="HTH_RRF2_1"/>
    <property type="match status" value="1"/>
</dbReference>
<dbReference type="PROSITE" id="PS51197">
    <property type="entry name" value="HTH_RRF2_2"/>
    <property type="match status" value="1"/>
</dbReference>
<gene>
    <name evidence="1" type="primary">nsrR</name>
    <name type="ordered locus">Ecok1_42290</name>
    <name type="ORF">APECO1_2214</name>
</gene>
<protein>
    <recommendedName>
        <fullName evidence="1">HTH-type transcriptional repressor NsrR</fullName>
    </recommendedName>
</protein>
<keyword id="KW-0001">2Fe-2S</keyword>
<keyword id="KW-0238">DNA-binding</keyword>
<keyword id="KW-0408">Iron</keyword>
<keyword id="KW-0411">Iron-sulfur</keyword>
<keyword id="KW-0479">Metal-binding</keyword>
<keyword id="KW-1185">Reference proteome</keyword>
<keyword id="KW-0678">Repressor</keyword>
<keyword id="KW-0804">Transcription</keyword>
<keyword id="KW-0805">Transcription regulation</keyword>
<comment type="function">
    <text evidence="1">Nitric oxide-sensitive repressor of genes involved in protecting the cell against nitrosative stress. May require iron for activity.</text>
</comment>
<comment type="cofactor">
    <cofactor evidence="1">
        <name>[2Fe-2S] cluster</name>
        <dbReference type="ChEBI" id="CHEBI:190135"/>
    </cofactor>
    <text evidence="1">Binds 1 [2Fe-2S] cluster per subunit.</text>
</comment>
<organism>
    <name type="scientific">Escherichia coli O1:K1 / APEC</name>
    <dbReference type="NCBI Taxonomy" id="405955"/>
    <lineage>
        <taxon>Bacteria</taxon>
        <taxon>Pseudomonadati</taxon>
        <taxon>Pseudomonadota</taxon>
        <taxon>Gammaproteobacteria</taxon>
        <taxon>Enterobacterales</taxon>
        <taxon>Enterobacteriaceae</taxon>
        <taxon>Escherichia</taxon>
    </lineage>
</organism>
<name>NSRR_ECOK1</name>
<reference key="1">
    <citation type="journal article" date="2007" name="J. Bacteriol.">
        <title>The genome sequence of avian pathogenic Escherichia coli strain O1:K1:H7 shares strong similarities with human extraintestinal pathogenic E. coli genomes.</title>
        <authorList>
            <person name="Johnson T.J."/>
            <person name="Kariyawasam S."/>
            <person name="Wannemuehler Y."/>
            <person name="Mangiamele P."/>
            <person name="Johnson S.J."/>
            <person name="Doetkott C."/>
            <person name="Skyberg J.A."/>
            <person name="Lynne A.M."/>
            <person name="Johnson J.R."/>
            <person name="Nolan L.K."/>
        </authorList>
    </citation>
    <scope>NUCLEOTIDE SEQUENCE [LARGE SCALE GENOMIC DNA]</scope>
</reference>
<evidence type="ECO:0000255" key="1">
    <source>
        <dbReference type="HAMAP-Rule" id="MF_01177"/>
    </source>
</evidence>